<organism>
    <name type="scientific">Listeria welshimeri serovar 6b (strain ATCC 35897 / DSM 20650 / CCUG 15529 / CIP 8149 / NCTC 11857 / SLCC 5334 / V8)</name>
    <dbReference type="NCBI Taxonomy" id="386043"/>
    <lineage>
        <taxon>Bacteria</taxon>
        <taxon>Bacillati</taxon>
        <taxon>Bacillota</taxon>
        <taxon>Bacilli</taxon>
        <taxon>Bacillales</taxon>
        <taxon>Listeriaceae</taxon>
        <taxon>Listeria</taxon>
    </lineage>
</organism>
<proteinExistence type="inferred from homology"/>
<reference key="1">
    <citation type="journal article" date="2006" name="J. Bacteriol.">
        <title>Whole-genome sequence of Listeria welshimeri reveals common steps in genome reduction with Listeria innocua as compared to Listeria monocytogenes.</title>
        <authorList>
            <person name="Hain T."/>
            <person name="Steinweg C."/>
            <person name="Kuenne C.T."/>
            <person name="Billion A."/>
            <person name="Ghai R."/>
            <person name="Chatterjee S.S."/>
            <person name="Domann E."/>
            <person name="Kaerst U."/>
            <person name="Goesmann A."/>
            <person name="Bekel T."/>
            <person name="Bartels D."/>
            <person name="Kaiser O."/>
            <person name="Meyer F."/>
            <person name="Puehler A."/>
            <person name="Weisshaar B."/>
            <person name="Wehland J."/>
            <person name="Liang C."/>
            <person name="Dandekar T."/>
            <person name="Lampidis R."/>
            <person name="Kreft J."/>
            <person name="Goebel W."/>
            <person name="Chakraborty T."/>
        </authorList>
    </citation>
    <scope>NUCLEOTIDE SEQUENCE [LARGE SCALE GENOMIC DNA]</scope>
    <source>
        <strain>ATCC 35897 / DSM 20650 / CCUG 15529 / CIP 8149 / NCTC 11857 / SLCC 5334 / V8</strain>
    </source>
</reference>
<protein>
    <recommendedName>
        <fullName evidence="1">Nucleoside triphosphate/diphosphate phosphatase</fullName>
        <ecNumber evidence="1">3.6.1.15</ecNumber>
        <ecNumber evidence="1">3.6.1.6</ecNumber>
    </recommendedName>
</protein>
<keyword id="KW-0378">Hydrolase</keyword>
<keyword id="KW-0460">Magnesium</keyword>
<keyword id="KW-0479">Metal-binding</keyword>
<name>NTDP_LISW6</name>
<gene>
    <name type="ordered locus">lwe1705</name>
</gene>
<dbReference type="EC" id="3.6.1.15" evidence="1"/>
<dbReference type="EC" id="3.6.1.6" evidence="1"/>
<dbReference type="EMBL" id="AM263198">
    <property type="protein sequence ID" value="CAK21123.1"/>
    <property type="molecule type" value="Genomic_DNA"/>
</dbReference>
<dbReference type="RefSeq" id="WP_003719986.1">
    <property type="nucleotide sequence ID" value="NC_008555.1"/>
</dbReference>
<dbReference type="SMR" id="A0AJE1"/>
<dbReference type="STRING" id="386043.lwe1705"/>
<dbReference type="KEGG" id="lwe:lwe1705"/>
<dbReference type="eggNOG" id="COG3557">
    <property type="taxonomic scope" value="Bacteria"/>
</dbReference>
<dbReference type="HOGENOM" id="CLU_109787_1_0_9"/>
<dbReference type="OrthoDB" id="1645325at2"/>
<dbReference type="Proteomes" id="UP000000779">
    <property type="component" value="Chromosome"/>
</dbReference>
<dbReference type="GO" id="GO:0000287">
    <property type="term" value="F:magnesium ion binding"/>
    <property type="evidence" value="ECO:0007669"/>
    <property type="project" value="UniProtKB-UniRule"/>
</dbReference>
<dbReference type="GO" id="GO:0017110">
    <property type="term" value="F:nucleoside diphosphate phosphatase activity"/>
    <property type="evidence" value="ECO:0007669"/>
    <property type="project" value="UniProtKB-UniRule"/>
</dbReference>
<dbReference type="GO" id="GO:0017111">
    <property type="term" value="F:ribonucleoside triphosphate phosphatase activity"/>
    <property type="evidence" value="ECO:0007669"/>
    <property type="project" value="UniProtKB-UniRule"/>
</dbReference>
<dbReference type="Gene3D" id="2.40.380.10">
    <property type="entry name" value="FomD-like"/>
    <property type="match status" value="1"/>
</dbReference>
<dbReference type="HAMAP" id="MF_01568">
    <property type="entry name" value="Ntdp"/>
    <property type="match status" value="1"/>
</dbReference>
<dbReference type="InterPro" id="IPR007295">
    <property type="entry name" value="DUF402"/>
</dbReference>
<dbReference type="InterPro" id="IPR035930">
    <property type="entry name" value="FomD-like_sf"/>
</dbReference>
<dbReference type="InterPro" id="IPR050212">
    <property type="entry name" value="Ntdp-like"/>
</dbReference>
<dbReference type="InterPro" id="IPR016882">
    <property type="entry name" value="SA1684"/>
</dbReference>
<dbReference type="NCBIfam" id="NF010183">
    <property type="entry name" value="PRK13662.1"/>
    <property type="match status" value="1"/>
</dbReference>
<dbReference type="PANTHER" id="PTHR39159">
    <property type="match status" value="1"/>
</dbReference>
<dbReference type="PANTHER" id="PTHR39159:SF1">
    <property type="entry name" value="UPF0374 PROTEIN YGAC"/>
    <property type="match status" value="1"/>
</dbReference>
<dbReference type="Pfam" id="PF04167">
    <property type="entry name" value="DUF402"/>
    <property type="match status" value="1"/>
</dbReference>
<dbReference type="PIRSF" id="PIRSF028345">
    <property type="entry name" value="UCP028345"/>
    <property type="match status" value="1"/>
</dbReference>
<dbReference type="SUPFAM" id="SSF159234">
    <property type="entry name" value="FomD-like"/>
    <property type="match status" value="1"/>
</dbReference>
<feature type="chain" id="PRO_1000069107" description="Nucleoside triphosphate/diphosphate phosphatase">
    <location>
        <begin position="1"/>
        <end position="175"/>
    </location>
</feature>
<feature type="active site" description="Proton donor" evidence="1">
    <location>
        <position position="23"/>
    </location>
</feature>
<feature type="binding site" evidence="1">
    <location>
        <position position="87"/>
    </location>
    <ligand>
        <name>Mg(2+)</name>
        <dbReference type="ChEBI" id="CHEBI:18420"/>
        <label>1</label>
    </ligand>
</feature>
<feature type="binding site" evidence="1">
    <location>
        <position position="103"/>
    </location>
    <ligand>
        <name>Mg(2+)</name>
        <dbReference type="ChEBI" id="CHEBI:18420"/>
        <label>1</label>
    </ligand>
</feature>
<feature type="binding site" evidence="1">
    <location>
        <position position="105"/>
    </location>
    <ligand>
        <name>Mg(2+)</name>
        <dbReference type="ChEBI" id="CHEBI:18420"/>
        <label>2</label>
    </ligand>
</feature>
<feature type="binding site" evidence="1">
    <location>
        <position position="107"/>
    </location>
    <ligand>
        <name>Mg(2+)</name>
        <dbReference type="ChEBI" id="CHEBI:18420"/>
        <label>1</label>
    </ligand>
</feature>
<feature type="binding site" evidence="1">
    <location>
        <position position="107"/>
    </location>
    <ligand>
        <name>Mg(2+)</name>
        <dbReference type="ChEBI" id="CHEBI:18420"/>
        <label>2</label>
    </ligand>
</feature>
<feature type="binding site" evidence="1">
    <location>
        <position position="120"/>
    </location>
    <ligand>
        <name>Mg(2+)</name>
        <dbReference type="ChEBI" id="CHEBI:18420"/>
        <label>2</label>
    </ligand>
</feature>
<feature type="binding site" evidence="1">
    <location>
        <position position="123"/>
    </location>
    <ligand>
        <name>Mg(2+)</name>
        <dbReference type="ChEBI" id="CHEBI:18420"/>
        <label>2</label>
    </ligand>
</feature>
<evidence type="ECO:0000255" key="1">
    <source>
        <dbReference type="HAMAP-Rule" id="MF_01568"/>
    </source>
</evidence>
<comment type="function">
    <text evidence="1">Has nucleoside phosphatase activity towards nucleoside triphosphates and nucleoside diphosphates.</text>
</comment>
<comment type="catalytic activity">
    <reaction evidence="1">
        <text>a ribonucleoside 5'-triphosphate + H2O = a ribonucleoside 5'-diphosphate + phosphate + H(+)</text>
        <dbReference type="Rhea" id="RHEA:23680"/>
        <dbReference type="ChEBI" id="CHEBI:15377"/>
        <dbReference type="ChEBI" id="CHEBI:15378"/>
        <dbReference type="ChEBI" id="CHEBI:43474"/>
        <dbReference type="ChEBI" id="CHEBI:57930"/>
        <dbReference type="ChEBI" id="CHEBI:61557"/>
        <dbReference type="EC" id="3.6.1.15"/>
    </reaction>
</comment>
<comment type="catalytic activity">
    <reaction evidence="1">
        <text>a ribonucleoside 5'-diphosphate + H2O = a ribonucleoside 5'-phosphate + phosphate + H(+)</text>
        <dbReference type="Rhea" id="RHEA:36799"/>
        <dbReference type="ChEBI" id="CHEBI:15377"/>
        <dbReference type="ChEBI" id="CHEBI:15378"/>
        <dbReference type="ChEBI" id="CHEBI:43474"/>
        <dbReference type="ChEBI" id="CHEBI:57930"/>
        <dbReference type="ChEBI" id="CHEBI:58043"/>
        <dbReference type="EC" id="3.6.1.6"/>
    </reaction>
</comment>
<comment type="cofactor">
    <cofactor evidence="1">
        <name>Mg(2+)</name>
        <dbReference type="ChEBI" id="CHEBI:18420"/>
    </cofactor>
</comment>
<comment type="similarity">
    <text evidence="1">Belongs to the Ntdp family.</text>
</comment>
<sequence>MYLPKEKEIIQIKSYKHNGKLHRTWKKTVVLKSTENIIIGGNDHTLVVEADGRKWVTREPSICYFHSDYWFNVISMIREDGIYHYCNLGTPFAVDEQALKYIDYDLDIKVFPDGRFHLLDEGEYEQHRRQMKYPDSIDRILKTNVDVLSHWILDKKGPFSPDYIDIWYEKYKEYR</sequence>
<accession>A0AJE1</accession>